<reference key="1">
    <citation type="journal article" date="2009" name="J. Virol.">
        <title>Quaranfil, Johnston Atoll, and Lake Chad viruses are novel members of the family Orthomyxoviridae.</title>
        <authorList>
            <person name="Presti R.M."/>
            <person name="Zhao G."/>
            <person name="Beatty W.L."/>
            <person name="Mihindukulasuriya K.A."/>
            <person name="da Rosa A.P."/>
            <person name="Popov V.L."/>
            <person name="Tesh R.B."/>
            <person name="Virgin H.W."/>
            <person name="Wang D."/>
        </authorList>
    </citation>
    <scope>NUCLEOTIDE SEQUENCE [GENOMIC RNA]</scope>
</reference>
<dbReference type="EMBL" id="GQ499304">
    <property type="protein sequence ID" value="ACY56280.1"/>
    <property type="molecule type" value="Genomic_RNA"/>
</dbReference>
<dbReference type="SMR" id="D0UFC9"/>
<dbReference type="Proteomes" id="UP000029941">
    <property type="component" value="Genome"/>
</dbReference>
<dbReference type="GO" id="GO:0044423">
    <property type="term" value="C:virion component"/>
    <property type="evidence" value="ECO:0007669"/>
    <property type="project" value="UniProtKB-KW"/>
</dbReference>
<evidence type="ECO:0000256" key="1">
    <source>
        <dbReference type="SAM" id="MobiDB-lite"/>
    </source>
</evidence>
<evidence type="ECO:0000305" key="2"/>
<feature type="chain" id="PRO_0000443072" description="Probable matrix protein">
    <location>
        <begin position="1"/>
        <end position="266"/>
    </location>
</feature>
<feature type="region of interest" description="Disordered" evidence="1">
    <location>
        <begin position="158"/>
        <end position="177"/>
    </location>
</feature>
<feature type="compositionally biased region" description="Acidic residues" evidence="1">
    <location>
        <begin position="167"/>
        <end position="177"/>
    </location>
</feature>
<organismHost>
    <name type="scientific">Ixodidae</name>
    <name type="common">hardbacked ticks</name>
    <dbReference type="NCBI Taxonomy" id="6939"/>
</organismHost>
<protein>
    <recommendedName>
        <fullName>Probable matrix protein</fullName>
    </recommendedName>
</protein>
<proteinExistence type="predicted"/>
<sequence length="266" mass="29472">MACHTGNRRFPSVEELSLGMAQMTLLGTPVSSGTFDSVETLADRMGELKINDKSKVAGLTSVWVASRYNPFQGGALFKSHLRCNSLKKIIYRTDRNKCVKTAKVYLDRGGPPQAEDWEKLFECAIGLLAKQDWGDSQFREETALRLVVAAGGGVKRDACSAGTGGTEEGDSDTEEEPLEKVMERATKRIIEETARLSKRRRPEALEAALELRDSFKILSAQGGPFSKLSKDEKTRWVTAFSKCLQPILDLNEGRLLYDYVKQVGSK</sequence>
<organism>
    <name type="scientific">Quaranfil virus (isolate QrfV/Tick/Afghanistan/EG_T_377/1968)</name>
    <name type="common">QRFV</name>
    <dbReference type="NCBI Taxonomy" id="1559362"/>
    <lineage>
        <taxon>Viruses</taxon>
        <taxon>Riboviria</taxon>
        <taxon>Orthornavirae</taxon>
        <taxon>Negarnaviricota</taxon>
        <taxon>Polyploviricotina</taxon>
        <taxon>Insthoviricetes</taxon>
        <taxon>Articulavirales</taxon>
        <taxon>Orthomyxoviridae</taxon>
        <taxon>Quaranjavirus</taxon>
        <taxon>Quaranjavirus quaranfilense</taxon>
    </lineage>
</organism>
<name>M1_QRFVE</name>
<gene>
    <name type="ordered locus">Segment 6</name>
</gene>
<comment type="function">
    <text evidence="2">May play a role in virion budding and release by binding the ribonucleocapsid and the host membrane.</text>
</comment>
<comment type="subcellular location">
    <subcellularLocation>
        <location evidence="2">Virion</location>
    </subcellularLocation>
</comment>
<keyword id="KW-1185">Reference proteome</keyword>
<keyword id="KW-0946">Virion</keyword>
<accession>D0UFC9</accession>